<accession>P74709</accession>
<sequence>MTPSPVLNLLVSNDDGIFSQGVRTLANTLVAAGHEVTVVCPDRERSATGHGLTLHRPIRAGIVEDVFDPRIKAWSCSGTPADCVKFALHAVMPRYPDFVLSGVNHGANLGTDVLYSGTVSAAMEGLIEGIPSIALSLVSFTATDFQPAADFANCFVQHLWRSPLTEPTLFSINIPAVPAEQIAGVRLTRQGLQRYSETFEERYDPRGKRYYWLAGERVKEIPQPDYLRLNRRIPTDVQASQDNFITITPLQYNLTDINGVNIIEKTNWLDHLNFD</sequence>
<gene>
    <name evidence="1" type="primary">surE</name>
    <name type="ordered locus">sll1108</name>
</gene>
<organism>
    <name type="scientific">Synechocystis sp. (strain ATCC 27184 / PCC 6803 / Kazusa)</name>
    <dbReference type="NCBI Taxonomy" id="1111708"/>
    <lineage>
        <taxon>Bacteria</taxon>
        <taxon>Bacillati</taxon>
        <taxon>Cyanobacteriota</taxon>
        <taxon>Cyanophyceae</taxon>
        <taxon>Synechococcales</taxon>
        <taxon>Merismopediaceae</taxon>
        <taxon>Synechocystis</taxon>
    </lineage>
</organism>
<keyword id="KW-0963">Cytoplasm</keyword>
<keyword id="KW-0378">Hydrolase</keyword>
<keyword id="KW-0479">Metal-binding</keyword>
<keyword id="KW-0547">Nucleotide-binding</keyword>
<keyword id="KW-1185">Reference proteome</keyword>
<protein>
    <recommendedName>
        <fullName evidence="1">5'-nucleotidase SurE</fullName>
        <ecNumber evidence="1">3.1.3.5</ecNumber>
    </recommendedName>
    <alternativeName>
        <fullName evidence="1">Nucleoside 5'-monophosphate phosphohydrolase</fullName>
    </alternativeName>
</protein>
<proteinExistence type="inferred from homology"/>
<reference key="1">
    <citation type="journal article" date="1996" name="DNA Res.">
        <title>Sequence analysis of the genome of the unicellular cyanobacterium Synechocystis sp. strain PCC6803. II. Sequence determination of the entire genome and assignment of potential protein-coding regions.</title>
        <authorList>
            <person name="Kaneko T."/>
            <person name="Sato S."/>
            <person name="Kotani H."/>
            <person name="Tanaka A."/>
            <person name="Asamizu E."/>
            <person name="Nakamura Y."/>
            <person name="Miyajima N."/>
            <person name="Hirosawa M."/>
            <person name="Sugiura M."/>
            <person name="Sasamoto S."/>
            <person name="Kimura T."/>
            <person name="Hosouchi T."/>
            <person name="Matsuno A."/>
            <person name="Muraki A."/>
            <person name="Nakazaki N."/>
            <person name="Naruo K."/>
            <person name="Okumura S."/>
            <person name="Shimpo S."/>
            <person name="Takeuchi C."/>
            <person name="Wada T."/>
            <person name="Watanabe A."/>
            <person name="Yamada M."/>
            <person name="Yasuda M."/>
            <person name="Tabata S."/>
        </authorList>
    </citation>
    <scope>NUCLEOTIDE SEQUENCE [LARGE SCALE GENOMIC DNA]</scope>
    <source>
        <strain>ATCC 27184 / PCC 6803 / Kazusa</strain>
    </source>
</reference>
<name>SURE_SYNY3</name>
<dbReference type="EC" id="3.1.3.5" evidence="1"/>
<dbReference type="EMBL" id="BA000022">
    <property type="protein sequence ID" value="BAA18828.1"/>
    <property type="molecule type" value="Genomic_DNA"/>
</dbReference>
<dbReference type="PIR" id="S76916">
    <property type="entry name" value="S76916"/>
</dbReference>
<dbReference type="SMR" id="P74709"/>
<dbReference type="IntAct" id="P74709">
    <property type="interactions" value="2"/>
</dbReference>
<dbReference type="STRING" id="1148.gene:10500600"/>
<dbReference type="PaxDb" id="1148-1653918"/>
<dbReference type="EnsemblBacteria" id="BAA18828">
    <property type="protein sequence ID" value="BAA18828"/>
    <property type="gene ID" value="BAA18828"/>
</dbReference>
<dbReference type="KEGG" id="syn:sll1108"/>
<dbReference type="eggNOG" id="COG0496">
    <property type="taxonomic scope" value="Bacteria"/>
</dbReference>
<dbReference type="InParanoid" id="P74709"/>
<dbReference type="PhylomeDB" id="P74709"/>
<dbReference type="Proteomes" id="UP000001425">
    <property type="component" value="Chromosome"/>
</dbReference>
<dbReference type="GO" id="GO:0005737">
    <property type="term" value="C:cytoplasm"/>
    <property type="evidence" value="ECO:0007669"/>
    <property type="project" value="UniProtKB-SubCell"/>
</dbReference>
<dbReference type="GO" id="GO:0008254">
    <property type="term" value="F:3'-nucleotidase activity"/>
    <property type="evidence" value="ECO:0000318"/>
    <property type="project" value="GO_Central"/>
</dbReference>
<dbReference type="GO" id="GO:0008253">
    <property type="term" value="F:5'-nucleotidase activity"/>
    <property type="evidence" value="ECO:0000318"/>
    <property type="project" value="GO_Central"/>
</dbReference>
<dbReference type="GO" id="GO:0004309">
    <property type="term" value="F:exopolyphosphatase activity"/>
    <property type="evidence" value="ECO:0000318"/>
    <property type="project" value="GO_Central"/>
</dbReference>
<dbReference type="GO" id="GO:0046872">
    <property type="term" value="F:metal ion binding"/>
    <property type="evidence" value="ECO:0007669"/>
    <property type="project" value="UniProtKB-UniRule"/>
</dbReference>
<dbReference type="GO" id="GO:0000166">
    <property type="term" value="F:nucleotide binding"/>
    <property type="evidence" value="ECO:0007669"/>
    <property type="project" value="UniProtKB-KW"/>
</dbReference>
<dbReference type="FunFam" id="3.40.1210.10:FF:000001">
    <property type="entry name" value="5'/3'-nucleotidase SurE"/>
    <property type="match status" value="1"/>
</dbReference>
<dbReference type="Gene3D" id="3.40.1210.10">
    <property type="entry name" value="Survival protein SurE-like phosphatase/nucleotidase"/>
    <property type="match status" value="1"/>
</dbReference>
<dbReference type="HAMAP" id="MF_00060">
    <property type="entry name" value="SurE"/>
    <property type="match status" value="1"/>
</dbReference>
<dbReference type="InterPro" id="IPR030048">
    <property type="entry name" value="SurE"/>
</dbReference>
<dbReference type="InterPro" id="IPR002828">
    <property type="entry name" value="SurE-like_Pase/nucleotidase"/>
</dbReference>
<dbReference type="InterPro" id="IPR036523">
    <property type="entry name" value="SurE-like_sf"/>
</dbReference>
<dbReference type="NCBIfam" id="NF001490">
    <property type="entry name" value="PRK00346.1-4"/>
    <property type="match status" value="1"/>
</dbReference>
<dbReference type="NCBIfam" id="NF001492">
    <property type="entry name" value="PRK00346.2-2"/>
    <property type="match status" value="1"/>
</dbReference>
<dbReference type="NCBIfam" id="TIGR00087">
    <property type="entry name" value="surE"/>
    <property type="match status" value="1"/>
</dbReference>
<dbReference type="PANTHER" id="PTHR30457">
    <property type="entry name" value="5'-NUCLEOTIDASE SURE"/>
    <property type="match status" value="1"/>
</dbReference>
<dbReference type="PANTHER" id="PTHR30457:SF12">
    <property type="entry name" value="5'_3'-NUCLEOTIDASE SURE"/>
    <property type="match status" value="1"/>
</dbReference>
<dbReference type="Pfam" id="PF01975">
    <property type="entry name" value="SurE"/>
    <property type="match status" value="1"/>
</dbReference>
<dbReference type="SUPFAM" id="SSF64167">
    <property type="entry name" value="SurE-like"/>
    <property type="match status" value="1"/>
</dbReference>
<evidence type="ECO:0000255" key="1">
    <source>
        <dbReference type="HAMAP-Rule" id="MF_00060"/>
    </source>
</evidence>
<comment type="function">
    <text evidence="1">Nucleotidase that shows phosphatase activity on nucleoside 5'-monophosphates.</text>
</comment>
<comment type="catalytic activity">
    <reaction evidence="1">
        <text>a ribonucleoside 5'-phosphate + H2O = a ribonucleoside + phosphate</text>
        <dbReference type="Rhea" id="RHEA:12484"/>
        <dbReference type="ChEBI" id="CHEBI:15377"/>
        <dbReference type="ChEBI" id="CHEBI:18254"/>
        <dbReference type="ChEBI" id="CHEBI:43474"/>
        <dbReference type="ChEBI" id="CHEBI:58043"/>
        <dbReference type="EC" id="3.1.3.5"/>
    </reaction>
</comment>
<comment type="cofactor">
    <cofactor evidence="1">
        <name>a divalent metal cation</name>
        <dbReference type="ChEBI" id="CHEBI:60240"/>
    </cofactor>
    <text evidence="1">Binds 1 divalent metal cation per subunit.</text>
</comment>
<comment type="subcellular location">
    <subcellularLocation>
        <location evidence="1">Cytoplasm</location>
    </subcellularLocation>
</comment>
<comment type="similarity">
    <text evidence="1">Belongs to the SurE nucleotidase family.</text>
</comment>
<feature type="chain" id="PRO_0000111845" description="5'-nucleotidase SurE">
    <location>
        <begin position="1"/>
        <end position="275"/>
    </location>
</feature>
<feature type="binding site" evidence="1">
    <location>
        <position position="14"/>
    </location>
    <ligand>
        <name>a divalent metal cation</name>
        <dbReference type="ChEBI" id="CHEBI:60240"/>
    </ligand>
</feature>
<feature type="binding site" evidence="1">
    <location>
        <position position="15"/>
    </location>
    <ligand>
        <name>a divalent metal cation</name>
        <dbReference type="ChEBI" id="CHEBI:60240"/>
    </ligand>
</feature>
<feature type="binding site" evidence="1">
    <location>
        <position position="46"/>
    </location>
    <ligand>
        <name>a divalent metal cation</name>
        <dbReference type="ChEBI" id="CHEBI:60240"/>
    </ligand>
</feature>
<feature type="binding site" evidence="1">
    <location>
        <position position="104"/>
    </location>
    <ligand>
        <name>a divalent metal cation</name>
        <dbReference type="ChEBI" id="CHEBI:60240"/>
    </ligand>
</feature>